<feature type="chain" id="PRO_0000094223" description="Elongation factor P">
    <location>
        <begin position="1"/>
        <end position="187"/>
    </location>
</feature>
<feature type="modified residue" description="N6-(3,6-diaminohexanoyl)-5-hydroxylysine" evidence="1">
    <location>
        <position position="33"/>
    </location>
</feature>
<organism>
    <name type="scientific">Blochmanniella floridana</name>
    <dbReference type="NCBI Taxonomy" id="203907"/>
    <lineage>
        <taxon>Bacteria</taxon>
        <taxon>Pseudomonadati</taxon>
        <taxon>Pseudomonadota</taxon>
        <taxon>Gammaproteobacteria</taxon>
        <taxon>Enterobacterales</taxon>
        <taxon>Enterobacteriaceae</taxon>
        <taxon>ant endosymbionts</taxon>
        <taxon>Candidatus Blochmanniella</taxon>
    </lineage>
</organism>
<keyword id="KW-0963">Cytoplasm</keyword>
<keyword id="KW-0251">Elongation factor</keyword>
<keyword id="KW-0379">Hydroxylation</keyword>
<keyword id="KW-0648">Protein biosynthesis</keyword>
<keyword id="KW-1185">Reference proteome</keyword>
<dbReference type="EMBL" id="BX248583">
    <property type="protein sequence ID" value="CAD83596.1"/>
    <property type="molecule type" value="Genomic_DNA"/>
</dbReference>
<dbReference type="SMR" id="Q7VQQ0"/>
<dbReference type="STRING" id="203907.Bfl072"/>
<dbReference type="KEGG" id="bfl:Bfl072"/>
<dbReference type="eggNOG" id="COG0231">
    <property type="taxonomic scope" value="Bacteria"/>
</dbReference>
<dbReference type="HOGENOM" id="CLU_074944_0_0_6"/>
<dbReference type="OrthoDB" id="9801844at2"/>
<dbReference type="UniPathway" id="UPA00345"/>
<dbReference type="Proteomes" id="UP000002192">
    <property type="component" value="Chromosome"/>
</dbReference>
<dbReference type="GO" id="GO:0005829">
    <property type="term" value="C:cytosol"/>
    <property type="evidence" value="ECO:0007669"/>
    <property type="project" value="UniProtKB-ARBA"/>
</dbReference>
<dbReference type="GO" id="GO:0003746">
    <property type="term" value="F:translation elongation factor activity"/>
    <property type="evidence" value="ECO:0007669"/>
    <property type="project" value="UniProtKB-UniRule"/>
</dbReference>
<dbReference type="GO" id="GO:0043043">
    <property type="term" value="P:peptide biosynthetic process"/>
    <property type="evidence" value="ECO:0007669"/>
    <property type="project" value="InterPro"/>
</dbReference>
<dbReference type="CDD" id="cd04470">
    <property type="entry name" value="S1_EF-P_repeat_1"/>
    <property type="match status" value="1"/>
</dbReference>
<dbReference type="FunFam" id="2.30.30.30:FF:000003">
    <property type="entry name" value="Elongation factor P"/>
    <property type="match status" value="1"/>
</dbReference>
<dbReference type="FunFam" id="2.40.50.140:FF:000004">
    <property type="entry name" value="Elongation factor P"/>
    <property type="match status" value="1"/>
</dbReference>
<dbReference type="Gene3D" id="2.30.30.30">
    <property type="match status" value="1"/>
</dbReference>
<dbReference type="Gene3D" id="2.40.50.140">
    <property type="entry name" value="Nucleic acid-binding proteins"/>
    <property type="match status" value="2"/>
</dbReference>
<dbReference type="HAMAP" id="MF_00141">
    <property type="entry name" value="EF_P"/>
    <property type="match status" value="1"/>
</dbReference>
<dbReference type="InterPro" id="IPR015365">
    <property type="entry name" value="Elong-fact-P_C"/>
</dbReference>
<dbReference type="InterPro" id="IPR012340">
    <property type="entry name" value="NA-bd_OB-fold"/>
</dbReference>
<dbReference type="InterPro" id="IPR014722">
    <property type="entry name" value="Rib_uL2_dom2"/>
</dbReference>
<dbReference type="InterPro" id="IPR020599">
    <property type="entry name" value="Transl_elong_fac_P/YeiP"/>
</dbReference>
<dbReference type="InterPro" id="IPR013185">
    <property type="entry name" value="Transl_elong_KOW-like"/>
</dbReference>
<dbReference type="InterPro" id="IPR001059">
    <property type="entry name" value="Transl_elong_P/YeiP_cen"/>
</dbReference>
<dbReference type="InterPro" id="IPR013852">
    <property type="entry name" value="Transl_elong_P/YeiP_CS"/>
</dbReference>
<dbReference type="InterPro" id="IPR011768">
    <property type="entry name" value="Transl_elongation_fac_P"/>
</dbReference>
<dbReference type="InterPro" id="IPR008991">
    <property type="entry name" value="Translation_prot_SH3-like_sf"/>
</dbReference>
<dbReference type="NCBIfam" id="TIGR00038">
    <property type="entry name" value="efp"/>
    <property type="match status" value="1"/>
</dbReference>
<dbReference type="NCBIfam" id="NF001810">
    <property type="entry name" value="PRK00529.1"/>
    <property type="match status" value="1"/>
</dbReference>
<dbReference type="PANTHER" id="PTHR30053">
    <property type="entry name" value="ELONGATION FACTOR P"/>
    <property type="match status" value="1"/>
</dbReference>
<dbReference type="PANTHER" id="PTHR30053:SF12">
    <property type="entry name" value="ELONGATION FACTOR P (EF-P) FAMILY PROTEIN"/>
    <property type="match status" value="1"/>
</dbReference>
<dbReference type="Pfam" id="PF01132">
    <property type="entry name" value="EFP"/>
    <property type="match status" value="1"/>
</dbReference>
<dbReference type="Pfam" id="PF08207">
    <property type="entry name" value="EFP_N"/>
    <property type="match status" value="1"/>
</dbReference>
<dbReference type="Pfam" id="PF09285">
    <property type="entry name" value="Elong-fact-P_C"/>
    <property type="match status" value="1"/>
</dbReference>
<dbReference type="PIRSF" id="PIRSF005901">
    <property type="entry name" value="EF-P"/>
    <property type="match status" value="1"/>
</dbReference>
<dbReference type="SMART" id="SM01185">
    <property type="entry name" value="EFP"/>
    <property type="match status" value="1"/>
</dbReference>
<dbReference type="SMART" id="SM00841">
    <property type="entry name" value="Elong-fact-P_C"/>
    <property type="match status" value="1"/>
</dbReference>
<dbReference type="SUPFAM" id="SSF50249">
    <property type="entry name" value="Nucleic acid-binding proteins"/>
    <property type="match status" value="2"/>
</dbReference>
<dbReference type="SUPFAM" id="SSF50104">
    <property type="entry name" value="Translation proteins SH3-like domain"/>
    <property type="match status" value="1"/>
</dbReference>
<dbReference type="PROSITE" id="PS01275">
    <property type="entry name" value="EFP"/>
    <property type="match status" value="1"/>
</dbReference>
<proteinExistence type="inferred from homology"/>
<protein>
    <recommendedName>
        <fullName evidence="1">Elongation factor P</fullName>
        <shortName evidence="1">EF-P</shortName>
    </recommendedName>
</protein>
<accession>Q7VQQ0</accession>
<name>EFP_BLOFL</name>
<evidence type="ECO:0000255" key="1">
    <source>
        <dbReference type="HAMAP-Rule" id="MF_00141"/>
    </source>
</evidence>
<sequence>MLYNINELKVGLKVIQNKEPYVIIKNECIKPGKGQSFNRVRFKQIKSGKILEKTLKPGDLVESANIVETELIYVYRDRDLWFFMNRDSFDQISVHFDILGKSVKWMVEQLVYVVVFWDNNPILVIPPEFIKLKIIKTNLITKNISTASGNKLAVVSTGAVVKVPFFIQSGELIKVNTHSGSYISRIK</sequence>
<comment type="function">
    <text evidence="1">Involved in peptide bond synthesis. Alleviates ribosome stalling that occurs when 3 or more consecutive Pro residues or the sequence PPG is present in a protein, possibly by augmenting the peptidyl transferase activity of the ribosome. Modification of Lys-33 is required for alleviation.</text>
</comment>
<comment type="pathway">
    <text evidence="1">Protein biosynthesis; polypeptide chain elongation.</text>
</comment>
<comment type="subcellular location">
    <subcellularLocation>
        <location evidence="1">Cytoplasm</location>
    </subcellularLocation>
</comment>
<comment type="PTM">
    <text evidence="1">May be beta-lysylated on the epsilon-amino group of Lys-33 by the combined action of EpmA and EpmB, and then hydroxylated on the C5 position of the same residue by EpmC (if this protein is present). Lysylation is critical for the stimulatory effect of EF-P on peptide-bond formation. The lysylation moiety may extend toward the peptidyltransferase center and stabilize the terminal 3-CCA end of the tRNA. Hydroxylation of the C5 position on Lys-33 may allow additional potential stabilizing hydrogen-bond interactions with the P-tRNA.</text>
</comment>
<comment type="similarity">
    <text evidence="1">Belongs to the elongation factor P family.</text>
</comment>
<reference key="1">
    <citation type="journal article" date="2003" name="Proc. Natl. Acad. Sci. U.S.A.">
        <title>The genome sequence of Blochmannia floridanus: comparative analysis of reduced genomes.</title>
        <authorList>
            <person name="Gil R."/>
            <person name="Silva F.J."/>
            <person name="Zientz E."/>
            <person name="Delmotte F."/>
            <person name="Gonzalez-Candelas F."/>
            <person name="Latorre A."/>
            <person name="Rausell C."/>
            <person name="Kamerbeek J."/>
            <person name="Gadau J."/>
            <person name="Hoelldobler B."/>
            <person name="van Ham R.C.H.J."/>
            <person name="Gross R."/>
            <person name="Moya A."/>
        </authorList>
    </citation>
    <scope>NUCLEOTIDE SEQUENCE [LARGE SCALE GENOMIC DNA]</scope>
</reference>
<gene>
    <name evidence="1" type="primary">efp</name>
    <name type="ordered locus">Bfl072</name>
</gene>